<gene>
    <name evidence="1" type="primary">ruvA</name>
    <name type="ordered locus">PBPRA1116</name>
</gene>
<feature type="chain" id="PRO_0000224890" description="Holliday junction branch migration complex subunit RuvA">
    <location>
        <begin position="1"/>
        <end position="206"/>
    </location>
</feature>
<feature type="region of interest" description="Domain I" evidence="1">
    <location>
        <begin position="1"/>
        <end position="64"/>
    </location>
</feature>
<feature type="region of interest" description="Domain II" evidence="1">
    <location>
        <begin position="65"/>
        <end position="143"/>
    </location>
</feature>
<feature type="region of interest" description="Flexible linker" evidence="1">
    <location>
        <begin position="144"/>
        <end position="157"/>
    </location>
</feature>
<feature type="region of interest" description="Domain III" evidence="1">
    <location>
        <begin position="158"/>
        <end position="206"/>
    </location>
</feature>
<accession>Q6LT49</accession>
<protein>
    <recommendedName>
        <fullName evidence="1">Holliday junction branch migration complex subunit RuvA</fullName>
    </recommendedName>
</protein>
<sequence>MIGRLSGTILEKQPPEVLIDVGGIGYEVQMPMSCFYELPEVGQAAVICTHFIVREDAQLLYGFNKKSERELFREVIKANGVGPKLGLAILSAMTASQFVLSVENEDITTLVKIPGVGKKTAERLVIEMRDRLKGWGEGDLFTPASDAAASNAEIQKYSSARAEDEAVSALIALGYKALQAAKVVSQVVKPEMSSENIIREALRSMV</sequence>
<organism>
    <name type="scientific">Photobacterium profundum (strain SS9)</name>
    <dbReference type="NCBI Taxonomy" id="298386"/>
    <lineage>
        <taxon>Bacteria</taxon>
        <taxon>Pseudomonadati</taxon>
        <taxon>Pseudomonadota</taxon>
        <taxon>Gammaproteobacteria</taxon>
        <taxon>Vibrionales</taxon>
        <taxon>Vibrionaceae</taxon>
        <taxon>Photobacterium</taxon>
    </lineage>
</organism>
<evidence type="ECO:0000255" key="1">
    <source>
        <dbReference type="HAMAP-Rule" id="MF_00031"/>
    </source>
</evidence>
<evidence type="ECO:0000305" key="2"/>
<name>RUVA_PHOPR</name>
<reference key="1">
    <citation type="journal article" date="2005" name="Science">
        <title>Life at depth: Photobacterium profundum genome sequence and expression analysis.</title>
        <authorList>
            <person name="Vezzi A."/>
            <person name="Campanaro S."/>
            <person name="D'Angelo M."/>
            <person name="Simonato F."/>
            <person name="Vitulo N."/>
            <person name="Lauro F.M."/>
            <person name="Cestaro A."/>
            <person name="Malacrida G."/>
            <person name="Simionati B."/>
            <person name="Cannata N."/>
            <person name="Romualdi C."/>
            <person name="Bartlett D.H."/>
            <person name="Valle G."/>
        </authorList>
    </citation>
    <scope>NUCLEOTIDE SEQUENCE [LARGE SCALE GENOMIC DNA]</scope>
    <source>
        <strain>ATCC BAA-1253 / SS9</strain>
    </source>
</reference>
<keyword id="KW-0963">Cytoplasm</keyword>
<keyword id="KW-0227">DNA damage</keyword>
<keyword id="KW-0233">DNA recombination</keyword>
<keyword id="KW-0234">DNA repair</keyword>
<keyword id="KW-0238">DNA-binding</keyword>
<keyword id="KW-1185">Reference proteome</keyword>
<comment type="function">
    <text evidence="1">The RuvA-RuvB-RuvC complex processes Holliday junction (HJ) DNA during genetic recombination and DNA repair, while the RuvA-RuvB complex plays an important role in the rescue of blocked DNA replication forks via replication fork reversal (RFR). RuvA specifically binds to HJ cruciform DNA, conferring on it an open structure. The RuvB hexamer acts as an ATP-dependent pump, pulling dsDNA into and through the RuvAB complex. HJ branch migration allows RuvC to scan DNA until it finds its consensus sequence, where it cleaves and resolves the cruciform DNA.</text>
</comment>
<comment type="subunit">
    <text evidence="1">Homotetramer. Forms an RuvA(8)-RuvB(12)-Holliday junction (HJ) complex. HJ DNA is sandwiched between 2 RuvA tetramers; dsDNA enters through RuvA and exits via RuvB. An RuvB hexamer assembles on each DNA strand where it exits the tetramer. Each RuvB hexamer is contacted by two RuvA subunits (via domain III) on 2 adjacent RuvB subunits; this complex drives branch migration. In the full resolvosome a probable DNA-RuvA(4)-RuvB(12)-RuvC(2) complex forms which resolves the HJ.</text>
</comment>
<comment type="subcellular location">
    <subcellularLocation>
        <location evidence="1">Cytoplasm</location>
    </subcellularLocation>
</comment>
<comment type="domain">
    <text evidence="1">Has three domains with a flexible linker between the domains II and III and assumes an 'L' shape. Domain III is highly mobile and contacts RuvB.</text>
</comment>
<comment type="similarity">
    <text evidence="1">Belongs to the RuvA family.</text>
</comment>
<comment type="sequence caution" evidence="2">
    <conflict type="erroneous initiation">
        <sequence resource="EMBL-CDS" id="CAG19527"/>
    </conflict>
    <text>Extended N-terminus.</text>
</comment>
<proteinExistence type="inferred from homology"/>
<dbReference type="EMBL" id="CR378666">
    <property type="protein sequence ID" value="CAG19527.1"/>
    <property type="status" value="ALT_INIT"/>
    <property type="molecule type" value="Genomic_DNA"/>
</dbReference>
<dbReference type="RefSeq" id="WP_011217859.1">
    <property type="nucleotide sequence ID" value="NC_006370.1"/>
</dbReference>
<dbReference type="SMR" id="Q6LT49"/>
<dbReference type="STRING" id="298386.PBPRA1116"/>
<dbReference type="KEGG" id="ppr:PBPRA1116"/>
<dbReference type="eggNOG" id="COG0632">
    <property type="taxonomic scope" value="Bacteria"/>
</dbReference>
<dbReference type="HOGENOM" id="CLU_087936_0_0_6"/>
<dbReference type="Proteomes" id="UP000000593">
    <property type="component" value="Chromosome 1"/>
</dbReference>
<dbReference type="GO" id="GO:0005737">
    <property type="term" value="C:cytoplasm"/>
    <property type="evidence" value="ECO:0007669"/>
    <property type="project" value="UniProtKB-SubCell"/>
</dbReference>
<dbReference type="GO" id="GO:0009379">
    <property type="term" value="C:Holliday junction helicase complex"/>
    <property type="evidence" value="ECO:0007669"/>
    <property type="project" value="InterPro"/>
</dbReference>
<dbReference type="GO" id="GO:0048476">
    <property type="term" value="C:Holliday junction resolvase complex"/>
    <property type="evidence" value="ECO:0007669"/>
    <property type="project" value="UniProtKB-UniRule"/>
</dbReference>
<dbReference type="GO" id="GO:0005524">
    <property type="term" value="F:ATP binding"/>
    <property type="evidence" value="ECO:0007669"/>
    <property type="project" value="InterPro"/>
</dbReference>
<dbReference type="GO" id="GO:0000400">
    <property type="term" value="F:four-way junction DNA binding"/>
    <property type="evidence" value="ECO:0007669"/>
    <property type="project" value="UniProtKB-UniRule"/>
</dbReference>
<dbReference type="GO" id="GO:0009378">
    <property type="term" value="F:four-way junction helicase activity"/>
    <property type="evidence" value="ECO:0007669"/>
    <property type="project" value="InterPro"/>
</dbReference>
<dbReference type="GO" id="GO:0006310">
    <property type="term" value="P:DNA recombination"/>
    <property type="evidence" value="ECO:0007669"/>
    <property type="project" value="UniProtKB-UniRule"/>
</dbReference>
<dbReference type="GO" id="GO:0006281">
    <property type="term" value="P:DNA repair"/>
    <property type="evidence" value="ECO:0007669"/>
    <property type="project" value="UniProtKB-UniRule"/>
</dbReference>
<dbReference type="CDD" id="cd14332">
    <property type="entry name" value="UBA_RuvA_C"/>
    <property type="match status" value="1"/>
</dbReference>
<dbReference type="FunFam" id="2.40.50.140:FF:000083">
    <property type="entry name" value="Holliday junction ATP-dependent DNA helicase RuvA"/>
    <property type="match status" value="1"/>
</dbReference>
<dbReference type="Gene3D" id="1.10.150.20">
    <property type="entry name" value="5' to 3' exonuclease, C-terminal subdomain"/>
    <property type="match status" value="1"/>
</dbReference>
<dbReference type="Gene3D" id="1.10.8.10">
    <property type="entry name" value="DNA helicase RuvA subunit, C-terminal domain"/>
    <property type="match status" value="1"/>
</dbReference>
<dbReference type="Gene3D" id="2.40.50.140">
    <property type="entry name" value="Nucleic acid-binding proteins"/>
    <property type="match status" value="1"/>
</dbReference>
<dbReference type="HAMAP" id="MF_00031">
    <property type="entry name" value="DNA_HJ_migration_RuvA"/>
    <property type="match status" value="1"/>
</dbReference>
<dbReference type="InterPro" id="IPR013849">
    <property type="entry name" value="DNA_helicase_Holl-junc_RuvA_I"/>
</dbReference>
<dbReference type="InterPro" id="IPR003583">
    <property type="entry name" value="Hlx-hairpin-Hlx_DNA-bd_motif"/>
</dbReference>
<dbReference type="InterPro" id="IPR012340">
    <property type="entry name" value="NA-bd_OB-fold"/>
</dbReference>
<dbReference type="InterPro" id="IPR000085">
    <property type="entry name" value="RuvA"/>
</dbReference>
<dbReference type="InterPro" id="IPR010994">
    <property type="entry name" value="RuvA_2-like"/>
</dbReference>
<dbReference type="InterPro" id="IPR011114">
    <property type="entry name" value="RuvA_C"/>
</dbReference>
<dbReference type="InterPro" id="IPR036267">
    <property type="entry name" value="RuvA_C_sf"/>
</dbReference>
<dbReference type="NCBIfam" id="TIGR00084">
    <property type="entry name" value="ruvA"/>
    <property type="match status" value="1"/>
</dbReference>
<dbReference type="Pfam" id="PF14520">
    <property type="entry name" value="HHH_5"/>
    <property type="match status" value="1"/>
</dbReference>
<dbReference type="Pfam" id="PF07499">
    <property type="entry name" value="RuvA_C"/>
    <property type="match status" value="1"/>
</dbReference>
<dbReference type="Pfam" id="PF01330">
    <property type="entry name" value="RuvA_N"/>
    <property type="match status" value="1"/>
</dbReference>
<dbReference type="SMART" id="SM00278">
    <property type="entry name" value="HhH1"/>
    <property type="match status" value="2"/>
</dbReference>
<dbReference type="SUPFAM" id="SSF46929">
    <property type="entry name" value="DNA helicase RuvA subunit, C-terminal domain"/>
    <property type="match status" value="1"/>
</dbReference>
<dbReference type="SUPFAM" id="SSF50249">
    <property type="entry name" value="Nucleic acid-binding proteins"/>
    <property type="match status" value="1"/>
</dbReference>
<dbReference type="SUPFAM" id="SSF47781">
    <property type="entry name" value="RuvA domain 2-like"/>
    <property type="match status" value="1"/>
</dbReference>